<feature type="chain" id="PRO_0000218829" description="Adiponectin receptor protein 2">
    <location>
        <begin position="1"/>
        <end position="386"/>
    </location>
</feature>
<feature type="topological domain" description="Cytoplasmic" evidence="5">
    <location>
        <begin position="1"/>
        <end position="147"/>
    </location>
</feature>
<feature type="transmembrane region" description="Helical; Name=1" evidence="5">
    <location>
        <begin position="148"/>
        <end position="168"/>
    </location>
</feature>
<feature type="topological domain" description="Extracellular" evidence="5">
    <location>
        <begin position="169"/>
        <end position="181"/>
    </location>
</feature>
<feature type="transmembrane region" description="Helical; Name=2" evidence="5">
    <location>
        <begin position="182"/>
        <end position="202"/>
    </location>
</feature>
<feature type="topological domain" description="Cytoplasmic" evidence="5">
    <location>
        <begin position="203"/>
        <end position="213"/>
    </location>
</feature>
<feature type="transmembrane region" description="Helical; Name=3" evidence="5">
    <location>
        <begin position="214"/>
        <end position="234"/>
    </location>
</feature>
<feature type="topological domain" description="Extracellular" evidence="5">
    <location>
        <begin position="235"/>
        <end position="245"/>
    </location>
</feature>
<feature type="transmembrane region" description="Helical; Name=4" evidence="5">
    <location>
        <begin position="246"/>
        <end position="266"/>
    </location>
</feature>
<feature type="topological domain" description="Cytoplasmic" evidence="5">
    <location>
        <begin position="267"/>
        <end position="273"/>
    </location>
</feature>
<feature type="transmembrane region" description="Helical; Name=5" evidence="5">
    <location>
        <begin position="274"/>
        <end position="294"/>
    </location>
</feature>
<feature type="topological domain" description="Extracellular" evidence="5">
    <location>
        <begin position="295"/>
        <end position="309"/>
    </location>
</feature>
<feature type="transmembrane region" description="Helical; Name=6" evidence="5">
    <location>
        <begin position="310"/>
        <end position="330"/>
    </location>
</feature>
<feature type="topological domain" description="Cytoplasmic" evidence="5">
    <location>
        <begin position="331"/>
        <end position="348"/>
    </location>
</feature>
<feature type="transmembrane region" description="Helical; Name=7" evidence="5">
    <location>
        <begin position="349"/>
        <end position="369"/>
    </location>
</feature>
<feature type="topological domain" description="Extracellular" evidence="5">
    <location>
        <begin position="370"/>
        <end position="386"/>
    </location>
</feature>
<feature type="region of interest" description="Disordered" evidence="2">
    <location>
        <begin position="1"/>
        <end position="71"/>
    </location>
</feature>
<feature type="compositionally biased region" description="Basic and acidic residues" evidence="2">
    <location>
        <begin position="15"/>
        <end position="41"/>
    </location>
</feature>
<feature type="binding site" evidence="5">
    <location>
        <position position="202"/>
    </location>
    <ligand>
        <name>Zn(2+)</name>
        <dbReference type="ChEBI" id="CHEBI:29105"/>
    </ligand>
</feature>
<feature type="binding site" evidence="5">
    <location>
        <position position="348"/>
    </location>
    <ligand>
        <name>Zn(2+)</name>
        <dbReference type="ChEBI" id="CHEBI:29105"/>
    </ligand>
</feature>
<feature type="binding site" evidence="5">
    <location>
        <position position="352"/>
    </location>
    <ligand>
        <name>Zn(2+)</name>
        <dbReference type="ChEBI" id="CHEBI:29105"/>
    </ligand>
</feature>
<feature type="sequence variant" id="VAR_078687" description="Found in a patient with autism spectrum disorder; uncertain significance." evidence="6">
    <location>
        <begin position="31"/>
        <end position="386"/>
    </location>
</feature>
<feature type="sequence variant" id="VAR_048203" description="In dbSNP:rs12298275.">
    <original>Q</original>
    <variation>R</variation>
    <location>
        <position position="39"/>
    </location>
</feature>
<feature type="mutagenesis site" description="Abolishes response to ADIPOQ binding; when associated with A-219; A-348 and A-352." evidence="5">
    <original>H</original>
    <variation>A</variation>
    <location>
        <position position="202"/>
    </location>
</feature>
<feature type="mutagenesis site" description="Impairs response to ADIPOQ binding. Abolishes response to ADIPOQ binding; when associated with A-202; A-348 and A-352." evidence="5">
    <original>D</original>
    <variation>A</variation>
    <location>
        <position position="219"/>
    </location>
</feature>
<feature type="mutagenesis site" description="Impairs response to ADIPOQ binding. Abolishes response to ADIPOQ binding; when associated with A-202; A-219 and A-352." evidence="5">
    <original>H</original>
    <variation>A</variation>
    <location>
        <position position="348"/>
    </location>
</feature>
<feature type="mutagenesis site" description="Abolishes response to ADIPOQ binding; when associated with A-202; A-219 and A-348." evidence="5">
    <original>H</original>
    <variation>A</variation>
    <location>
        <position position="352"/>
    </location>
</feature>
<feature type="sequence conflict" description="In Ref. 2; BAB15062." evidence="9" ref="2">
    <original>F</original>
    <variation>S</variation>
    <location>
        <position position="158"/>
    </location>
</feature>
<feature type="helix" evidence="11">
    <location>
        <begin position="108"/>
        <end position="110"/>
    </location>
</feature>
<feature type="helix" evidence="11">
    <location>
        <begin position="113"/>
        <end position="115"/>
    </location>
</feature>
<feature type="helix" evidence="11">
    <location>
        <begin position="132"/>
        <end position="137"/>
    </location>
</feature>
<feature type="helix" evidence="11">
    <location>
        <begin position="138"/>
        <end position="140"/>
    </location>
</feature>
<feature type="helix" evidence="11">
    <location>
        <begin position="146"/>
        <end position="167"/>
    </location>
</feature>
<feature type="helix" evidence="11">
    <location>
        <begin position="171"/>
        <end position="173"/>
    </location>
</feature>
<feature type="strand" evidence="12">
    <location>
        <begin position="174"/>
        <end position="176"/>
    </location>
</feature>
<feature type="helix" evidence="11">
    <location>
        <begin position="177"/>
        <end position="203"/>
    </location>
</feature>
<feature type="helix" evidence="11">
    <location>
        <begin position="209"/>
        <end position="238"/>
    </location>
</feature>
<feature type="turn" evidence="13">
    <location>
        <begin position="239"/>
        <end position="241"/>
    </location>
</feature>
<feature type="helix" evidence="11">
    <location>
        <begin position="243"/>
        <end position="263"/>
    </location>
</feature>
<feature type="turn" evidence="11">
    <location>
        <begin position="267"/>
        <end position="269"/>
    </location>
</feature>
<feature type="helix" evidence="11">
    <location>
        <begin position="272"/>
        <end position="274"/>
    </location>
</feature>
<feature type="helix" evidence="11">
    <location>
        <begin position="275"/>
        <end position="287"/>
    </location>
</feature>
<feature type="helix" evidence="11">
    <location>
        <begin position="290"/>
        <end position="300"/>
    </location>
</feature>
<feature type="helix" evidence="11">
    <location>
        <begin position="302"/>
        <end position="307"/>
    </location>
</feature>
<feature type="helix" evidence="11">
    <location>
        <begin position="310"/>
        <end position="330"/>
    </location>
</feature>
<feature type="turn" evidence="11">
    <location>
        <begin position="331"/>
        <end position="336"/>
    </location>
</feature>
<feature type="turn" evidence="11">
    <location>
        <begin position="338"/>
        <end position="340"/>
    </location>
</feature>
<feature type="strand" evidence="11">
    <location>
        <begin position="341"/>
        <end position="345"/>
    </location>
</feature>
<feature type="helix" evidence="11">
    <location>
        <begin position="347"/>
        <end position="376"/>
    </location>
</feature>
<reference key="1">
    <citation type="journal article" date="2005" name="J. Mol. Evol.">
        <title>PAQR proteins: a novel membrane receptor family defined by an ancient 7-transmembrane pass motif.</title>
        <authorList>
            <person name="Tang Y.T."/>
            <person name="Hu T."/>
            <person name="Arterburn M."/>
            <person name="Boyle B."/>
            <person name="Bright J.M."/>
            <person name="Emtage P.C."/>
            <person name="Funk W.D."/>
        </authorList>
    </citation>
    <scope>NUCLEOTIDE SEQUENCE [MRNA]</scope>
    <scope>TISSUE SPECIFICITY</scope>
</reference>
<reference key="2">
    <citation type="journal article" date="2004" name="Nat. Genet.">
        <title>Complete sequencing and characterization of 21,243 full-length human cDNAs.</title>
        <authorList>
            <person name="Ota T."/>
            <person name="Suzuki Y."/>
            <person name="Nishikawa T."/>
            <person name="Otsuki T."/>
            <person name="Sugiyama T."/>
            <person name="Irie R."/>
            <person name="Wakamatsu A."/>
            <person name="Hayashi K."/>
            <person name="Sato H."/>
            <person name="Nagai K."/>
            <person name="Kimura K."/>
            <person name="Makita H."/>
            <person name="Sekine M."/>
            <person name="Obayashi M."/>
            <person name="Nishi T."/>
            <person name="Shibahara T."/>
            <person name="Tanaka T."/>
            <person name="Ishii S."/>
            <person name="Yamamoto J."/>
            <person name="Saito K."/>
            <person name="Kawai Y."/>
            <person name="Isono Y."/>
            <person name="Nakamura Y."/>
            <person name="Nagahari K."/>
            <person name="Murakami K."/>
            <person name="Yasuda T."/>
            <person name="Iwayanagi T."/>
            <person name="Wagatsuma M."/>
            <person name="Shiratori A."/>
            <person name="Sudo H."/>
            <person name="Hosoiri T."/>
            <person name="Kaku Y."/>
            <person name="Kodaira H."/>
            <person name="Kondo H."/>
            <person name="Sugawara M."/>
            <person name="Takahashi M."/>
            <person name="Kanda K."/>
            <person name="Yokoi T."/>
            <person name="Furuya T."/>
            <person name="Kikkawa E."/>
            <person name="Omura Y."/>
            <person name="Abe K."/>
            <person name="Kamihara K."/>
            <person name="Katsuta N."/>
            <person name="Sato K."/>
            <person name="Tanikawa M."/>
            <person name="Yamazaki M."/>
            <person name="Ninomiya K."/>
            <person name="Ishibashi T."/>
            <person name="Yamashita H."/>
            <person name="Murakawa K."/>
            <person name="Fujimori K."/>
            <person name="Tanai H."/>
            <person name="Kimata M."/>
            <person name="Watanabe M."/>
            <person name="Hiraoka S."/>
            <person name="Chiba Y."/>
            <person name="Ishida S."/>
            <person name="Ono Y."/>
            <person name="Takiguchi S."/>
            <person name="Watanabe S."/>
            <person name="Yosida M."/>
            <person name="Hotuta T."/>
            <person name="Kusano J."/>
            <person name="Kanehori K."/>
            <person name="Takahashi-Fujii A."/>
            <person name="Hara H."/>
            <person name="Tanase T.-O."/>
            <person name="Nomura Y."/>
            <person name="Togiya S."/>
            <person name="Komai F."/>
            <person name="Hara R."/>
            <person name="Takeuchi K."/>
            <person name="Arita M."/>
            <person name="Imose N."/>
            <person name="Musashino K."/>
            <person name="Yuuki H."/>
            <person name="Oshima A."/>
            <person name="Sasaki N."/>
            <person name="Aotsuka S."/>
            <person name="Yoshikawa Y."/>
            <person name="Matsunawa H."/>
            <person name="Ichihara T."/>
            <person name="Shiohata N."/>
            <person name="Sano S."/>
            <person name="Moriya S."/>
            <person name="Momiyama H."/>
            <person name="Satoh N."/>
            <person name="Takami S."/>
            <person name="Terashima Y."/>
            <person name="Suzuki O."/>
            <person name="Nakagawa S."/>
            <person name="Senoh A."/>
            <person name="Mizoguchi H."/>
            <person name="Goto Y."/>
            <person name="Shimizu F."/>
            <person name="Wakebe H."/>
            <person name="Hishigaki H."/>
            <person name="Watanabe T."/>
            <person name="Sugiyama A."/>
            <person name="Takemoto M."/>
            <person name="Kawakami B."/>
            <person name="Yamazaki M."/>
            <person name="Watanabe K."/>
            <person name="Kumagai A."/>
            <person name="Itakura S."/>
            <person name="Fukuzumi Y."/>
            <person name="Fujimori Y."/>
            <person name="Komiyama M."/>
            <person name="Tashiro H."/>
            <person name="Tanigami A."/>
            <person name="Fujiwara T."/>
            <person name="Ono T."/>
            <person name="Yamada K."/>
            <person name="Fujii Y."/>
            <person name="Ozaki K."/>
            <person name="Hirao M."/>
            <person name="Ohmori Y."/>
            <person name="Kawabata A."/>
            <person name="Hikiji T."/>
            <person name="Kobatake N."/>
            <person name="Inagaki H."/>
            <person name="Ikema Y."/>
            <person name="Okamoto S."/>
            <person name="Okitani R."/>
            <person name="Kawakami T."/>
            <person name="Noguchi S."/>
            <person name="Itoh T."/>
            <person name="Shigeta K."/>
            <person name="Senba T."/>
            <person name="Matsumura K."/>
            <person name="Nakajima Y."/>
            <person name="Mizuno T."/>
            <person name="Morinaga M."/>
            <person name="Sasaki M."/>
            <person name="Togashi T."/>
            <person name="Oyama M."/>
            <person name="Hata H."/>
            <person name="Watanabe M."/>
            <person name="Komatsu T."/>
            <person name="Mizushima-Sugano J."/>
            <person name="Satoh T."/>
            <person name="Shirai Y."/>
            <person name="Takahashi Y."/>
            <person name="Nakagawa K."/>
            <person name="Okumura K."/>
            <person name="Nagase T."/>
            <person name="Nomura N."/>
            <person name="Kikuchi H."/>
            <person name="Masuho Y."/>
            <person name="Yamashita R."/>
            <person name="Nakai K."/>
            <person name="Yada T."/>
            <person name="Nakamura Y."/>
            <person name="Ohara O."/>
            <person name="Isogai T."/>
            <person name="Sugano S."/>
        </authorList>
    </citation>
    <scope>NUCLEOTIDE SEQUENCE [LARGE SCALE MRNA]</scope>
    <source>
        <tissue>Colon</tissue>
        <tissue>Hippocampus</tissue>
        <tissue>Trachea</tissue>
    </source>
</reference>
<reference key="3">
    <citation type="submission" date="2005-09" db="EMBL/GenBank/DDBJ databases">
        <authorList>
            <person name="Mural R.J."/>
            <person name="Istrail S."/>
            <person name="Sutton G.G."/>
            <person name="Florea L."/>
            <person name="Halpern A.L."/>
            <person name="Mobarry C.M."/>
            <person name="Lippert R."/>
            <person name="Walenz B."/>
            <person name="Shatkay H."/>
            <person name="Dew I."/>
            <person name="Miller J.R."/>
            <person name="Flanigan M.J."/>
            <person name="Edwards N.J."/>
            <person name="Bolanos R."/>
            <person name="Fasulo D."/>
            <person name="Halldorsson B.V."/>
            <person name="Hannenhalli S."/>
            <person name="Turner R."/>
            <person name="Yooseph S."/>
            <person name="Lu F."/>
            <person name="Nusskern D.R."/>
            <person name="Shue B.C."/>
            <person name="Zheng X.H."/>
            <person name="Zhong F."/>
            <person name="Delcher A.L."/>
            <person name="Huson D.H."/>
            <person name="Kravitz S.A."/>
            <person name="Mouchard L."/>
            <person name="Reinert K."/>
            <person name="Remington K.A."/>
            <person name="Clark A.G."/>
            <person name="Waterman M.S."/>
            <person name="Eichler E.E."/>
            <person name="Adams M.D."/>
            <person name="Hunkapiller M.W."/>
            <person name="Myers E.W."/>
            <person name="Venter J.C."/>
        </authorList>
    </citation>
    <scope>NUCLEOTIDE SEQUENCE [LARGE SCALE GENOMIC DNA]</scope>
</reference>
<reference key="4">
    <citation type="journal article" date="2004" name="Genome Res.">
        <title>The status, quality, and expansion of the NIH full-length cDNA project: the Mammalian Gene Collection (MGC).</title>
        <authorList>
            <consortium name="The MGC Project Team"/>
        </authorList>
    </citation>
    <scope>NUCLEOTIDE SEQUENCE [LARGE SCALE MRNA]</scope>
    <source>
        <tissue>Uterus</tissue>
    </source>
</reference>
<reference key="5">
    <citation type="journal article" date="2003" name="Nature">
        <title>Cloning of adiponectin receptors that mediate antidiabetic metabolic effects.</title>
        <authorList>
            <person name="Yamauchi T."/>
            <person name="Kamon J."/>
            <person name="Ito Y."/>
            <person name="Tsuchida A."/>
            <person name="Yokomizo T."/>
            <person name="Kita S."/>
            <person name="Sugiyama T."/>
            <person name="Miyagishi M."/>
            <person name="Hara K."/>
            <person name="Tsunoda M."/>
            <person name="Murakami K."/>
            <person name="Ohteki T."/>
            <person name="Uchida S."/>
            <person name="Takekawa S."/>
            <person name="Waki H."/>
            <person name="Tsuno N.H."/>
            <person name="Shibata Y."/>
            <person name="Terauchi Y."/>
            <person name="Froguel P."/>
            <person name="Tobe K."/>
            <person name="Koyasu S."/>
            <person name="Taira K."/>
            <person name="Kitamura T."/>
            <person name="Shimizu T."/>
            <person name="Nagai R."/>
            <person name="Kadowaki T."/>
        </authorList>
    </citation>
    <scope>FUNCTION</scope>
    <scope>SUBUNIT</scope>
    <scope>SUBCELLULAR LOCATION</scope>
    <scope>TISSUE SPECIFICITY</scope>
    <scope>TOPOLOGY</scope>
</reference>
<reference key="6">
    <citation type="journal article" date="2014" name="J. Proteomics">
        <title>An enzyme assisted RP-RPLC approach for in-depth analysis of human liver phosphoproteome.</title>
        <authorList>
            <person name="Bian Y."/>
            <person name="Song C."/>
            <person name="Cheng K."/>
            <person name="Dong M."/>
            <person name="Wang F."/>
            <person name="Huang J."/>
            <person name="Sun D."/>
            <person name="Wang L."/>
            <person name="Ye M."/>
            <person name="Zou H."/>
        </authorList>
    </citation>
    <scope>IDENTIFICATION BY MASS SPECTROMETRY [LARGE SCALE ANALYSIS]</scope>
    <source>
        <tissue>Liver</tissue>
    </source>
</reference>
<reference key="7">
    <citation type="journal article" date="2015" name="Nature">
        <title>Crystal structures of the human adiponectin receptors.</title>
        <authorList>
            <person name="Tanabe H."/>
            <person name="Fujii Y."/>
            <person name="Okada-Iwabu M."/>
            <person name="Iwabu M."/>
            <person name="Nakamura Y."/>
            <person name="Hosaka T."/>
            <person name="Motoyama K."/>
            <person name="Ikeda M."/>
            <person name="Wakiyama M."/>
            <person name="Terada T."/>
            <person name="Ohsawa N."/>
            <person name="Hato M."/>
            <person name="Ogasawara S."/>
            <person name="Hino T."/>
            <person name="Murata T."/>
            <person name="Iwata S."/>
            <person name="Hirata K."/>
            <person name="Kawano Y."/>
            <person name="Yamamoto M."/>
            <person name="Kimura-Someya T."/>
            <person name="Shirouzu M."/>
            <person name="Yamauchi T."/>
            <person name="Kadowaki T."/>
            <person name="Yokoyama S."/>
        </authorList>
    </citation>
    <scope>X-RAY CRYSTALLOGRAPHY (2.40 ANGSTROMS) OF 100-386 IN COMPLEX WITH ZINC</scope>
    <scope>FUNCTION</scope>
    <scope>TOPOLOGY</scope>
    <scope>SUBCELLULAR LOCATION</scope>
    <scope>MUTAGENESIS OF HIS-202; ASP-219; HIS-348 AND HIS-352</scope>
</reference>
<reference key="8">
    <citation type="journal article" date="2015" name="Mol. Autism">
        <title>Integrated analysis of whole-exome sequencing and transcriptome profiling in males with autism spectrum disorders.</title>
        <authorList>
            <person name="Codina-Sola M."/>
            <person name="Rodriguez-Santiago B."/>
            <person name="Homs A."/>
            <person name="Santoyo J."/>
            <person name="Rigau M."/>
            <person name="Aznar-Lain G."/>
            <person name="Del Campo M."/>
            <person name="Gener B."/>
            <person name="Gabau E."/>
            <person name="Botella M.P."/>
            <person name="Gutierrez-Arumi A."/>
            <person name="Antinolo G."/>
            <person name="Perez-Jurado L.A."/>
            <person name="Cusco I."/>
        </authorList>
    </citation>
    <scope>VARIANT 31-ARG--LEU-386 DEL</scope>
</reference>
<accession>Q86V24</accession>
<accession>Q53YY5</accession>
<accession>Q9H737</accession>
<comment type="function">
    <text evidence="1 3 5">Receptor for ADIPOQ, an essential hormone secreted by adipocytes that regulates glucose and lipid metabolism (PubMed:12802337, PubMed:25855295). Required for normal body fat and glucose homeostasis. ADIPOQ-binding activates a signaling cascade that leads to increased PPARA activity, and ultimately to increased fatty acid oxidation and glucose uptake. Has intermediate affinity for globular and full-length adiponectin. Required for normal revascularization after chronic ischemia caused by severing of blood vessels (By similarity).</text>
</comment>
<comment type="subunit">
    <text evidence="1 3">May form homooligomers and heterooligomers with ADIPOR1 (PubMed:12802337). Interacts with APPL2 (via BAR domain); ADIPOQ dissociates this interaction (By similarity).</text>
</comment>
<comment type="interaction">
    <interactant intactId="EBI-1769445">
        <id>Q86V24</id>
    </interactant>
    <interactant intactId="EBI-1045825">
        <id>P55061</id>
        <label>TMBIM6</label>
    </interactant>
    <organismsDiffer>false</organismsDiffer>
    <experiments>3</experiments>
</comment>
<comment type="subcellular location">
    <subcellularLocation>
        <location evidence="3 5">Cell membrane</location>
        <topology evidence="3 5">Multi-pass membrane protein</topology>
    </subcellularLocation>
    <text evidence="3">Localized to the cell membrane and intracellular organelles.</text>
</comment>
<comment type="tissue specificity">
    <text evidence="3 4">Ubiquitous (PubMed:16044242). Highly expressed in skeletal muscle, liver and placenta (PubMed:12802337). Weakly expressed in brain, heart, colon, spleen, kidney, thymus, small intestine, peripheral blood leukocytes and lung (PubMed:12802337).</text>
</comment>
<comment type="domain">
    <text evidence="3">The N-terminus is cytoplasmic and the C-terminus is extracellular, contrary to what is observed for G-protein coupled receptors. Unlike G-protein coupled receptors, transmembrane helices are not kinked or tilted relative to the plane of the membrane.</text>
</comment>
<comment type="similarity">
    <text evidence="9">Belongs to the ADIPOR family.</text>
</comment>
<comment type="sequence caution" evidence="9">
    <conflict type="erroneous initiation">
        <sequence resource="EMBL-CDS" id="BAB15062"/>
    </conflict>
    <text>Truncated N-terminus.</text>
</comment>
<comment type="online information" name="Wikipedia">
    <link uri="https://en.wikipedia.org/wiki/Adiponectin"/>
    <text>Adiponectin entry</text>
</comment>
<evidence type="ECO:0000250" key="1">
    <source>
        <dbReference type="UniProtKB" id="Q8BQS5"/>
    </source>
</evidence>
<evidence type="ECO:0000256" key="2">
    <source>
        <dbReference type="SAM" id="MobiDB-lite"/>
    </source>
</evidence>
<evidence type="ECO:0000269" key="3">
    <source>
    </source>
</evidence>
<evidence type="ECO:0000269" key="4">
    <source>
    </source>
</evidence>
<evidence type="ECO:0000269" key="5">
    <source>
    </source>
</evidence>
<evidence type="ECO:0000269" key="6">
    <source>
    </source>
</evidence>
<evidence type="ECO:0000303" key="7">
    <source>
    </source>
</evidence>
<evidence type="ECO:0000303" key="8">
    <source>
    </source>
</evidence>
<evidence type="ECO:0000305" key="9"/>
<evidence type="ECO:0000312" key="10">
    <source>
        <dbReference type="HGNC" id="HGNC:24041"/>
    </source>
</evidence>
<evidence type="ECO:0007829" key="11">
    <source>
        <dbReference type="PDB" id="5LWY"/>
    </source>
</evidence>
<evidence type="ECO:0007829" key="12">
    <source>
        <dbReference type="PDB" id="5LX9"/>
    </source>
</evidence>
<evidence type="ECO:0007829" key="13">
    <source>
        <dbReference type="PDB" id="5LXA"/>
    </source>
</evidence>
<name>PAQR2_HUMAN</name>
<organism>
    <name type="scientific">Homo sapiens</name>
    <name type="common">Human</name>
    <dbReference type="NCBI Taxonomy" id="9606"/>
    <lineage>
        <taxon>Eukaryota</taxon>
        <taxon>Metazoa</taxon>
        <taxon>Chordata</taxon>
        <taxon>Craniata</taxon>
        <taxon>Vertebrata</taxon>
        <taxon>Euteleostomi</taxon>
        <taxon>Mammalia</taxon>
        <taxon>Eutheria</taxon>
        <taxon>Euarchontoglires</taxon>
        <taxon>Primates</taxon>
        <taxon>Haplorrhini</taxon>
        <taxon>Catarrhini</taxon>
        <taxon>Hominidae</taxon>
        <taxon>Homo</taxon>
    </lineage>
</organism>
<gene>
    <name evidence="10" type="primary">ADIPOR2</name>
    <name evidence="7" type="synonym">PAQR2</name>
</gene>
<proteinExistence type="evidence at protein level"/>
<dbReference type="EMBL" id="AY424280">
    <property type="protein sequence ID" value="AAR08368.1"/>
    <property type="molecule type" value="mRNA"/>
</dbReference>
<dbReference type="EMBL" id="AK025085">
    <property type="protein sequence ID" value="BAB15062.1"/>
    <property type="status" value="ALT_INIT"/>
    <property type="molecule type" value="mRNA"/>
</dbReference>
<dbReference type="EMBL" id="AK127196">
    <property type="protein sequence ID" value="BAC86881.1"/>
    <property type="molecule type" value="mRNA"/>
</dbReference>
<dbReference type="EMBL" id="AK128511">
    <property type="protein sequence ID" value="BAC87473.1"/>
    <property type="molecule type" value="mRNA"/>
</dbReference>
<dbReference type="EMBL" id="CH471116">
    <property type="protein sequence ID" value="EAW88924.1"/>
    <property type="molecule type" value="Genomic_DNA"/>
</dbReference>
<dbReference type="EMBL" id="BC051858">
    <property type="protein sequence ID" value="AAH51858.1"/>
    <property type="molecule type" value="mRNA"/>
</dbReference>
<dbReference type="CCDS" id="CCDS8511.1"/>
<dbReference type="RefSeq" id="NP_001362293.1">
    <property type="nucleotide sequence ID" value="NM_001375364.1"/>
</dbReference>
<dbReference type="RefSeq" id="NP_001362294.1">
    <property type="nucleotide sequence ID" value="NM_001375365.1"/>
</dbReference>
<dbReference type="RefSeq" id="NP_078827.2">
    <property type="nucleotide sequence ID" value="NM_024551.2"/>
</dbReference>
<dbReference type="RefSeq" id="XP_005253846.1">
    <property type="nucleotide sequence ID" value="XM_005253789.1"/>
</dbReference>
<dbReference type="RefSeq" id="XP_006719081.1">
    <property type="nucleotide sequence ID" value="XM_006719018.3"/>
</dbReference>
<dbReference type="RefSeq" id="XP_011519326.1">
    <property type="nucleotide sequence ID" value="XM_011521024.2"/>
</dbReference>
<dbReference type="RefSeq" id="XP_047285501.1">
    <property type="nucleotide sequence ID" value="XM_047429545.1"/>
</dbReference>
<dbReference type="RefSeq" id="XP_047285502.1">
    <property type="nucleotide sequence ID" value="XM_047429546.1"/>
</dbReference>
<dbReference type="RefSeq" id="XP_054188294.1">
    <property type="nucleotide sequence ID" value="XM_054332319.1"/>
</dbReference>
<dbReference type="RefSeq" id="XP_054188295.1">
    <property type="nucleotide sequence ID" value="XM_054332320.1"/>
</dbReference>
<dbReference type="RefSeq" id="XP_054188296.1">
    <property type="nucleotide sequence ID" value="XM_054332321.1"/>
</dbReference>
<dbReference type="RefSeq" id="XP_054188297.1">
    <property type="nucleotide sequence ID" value="XM_054332322.1"/>
</dbReference>
<dbReference type="RefSeq" id="XP_054229204.1">
    <property type="nucleotide sequence ID" value="XM_054373229.1"/>
</dbReference>
<dbReference type="RefSeq" id="XP_054229205.1">
    <property type="nucleotide sequence ID" value="XM_054373230.1"/>
</dbReference>
<dbReference type="RefSeq" id="XP_054229206.1">
    <property type="nucleotide sequence ID" value="XM_054373231.1"/>
</dbReference>
<dbReference type="RefSeq" id="XP_054229207.1">
    <property type="nucleotide sequence ID" value="XM_054373232.1"/>
</dbReference>
<dbReference type="PDB" id="5LWY">
    <property type="method" value="X-ray"/>
    <property type="resolution" value="2.40 A"/>
    <property type="chains" value="A=100-386"/>
</dbReference>
<dbReference type="PDB" id="5LX9">
    <property type="method" value="X-ray"/>
    <property type="resolution" value="2.40 A"/>
    <property type="chains" value="A=99-386"/>
</dbReference>
<dbReference type="PDB" id="5LXA">
    <property type="method" value="X-ray"/>
    <property type="resolution" value="3.00 A"/>
    <property type="chains" value="A=100-386"/>
</dbReference>
<dbReference type="PDB" id="6KS1">
    <property type="method" value="X-ray"/>
    <property type="resolution" value="2.40 A"/>
    <property type="chains" value="A=100-386"/>
</dbReference>
<dbReference type="PDB" id="6YX9">
    <property type="method" value="X-ray"/>
    <property type="resolution" value="2.40 A"/>
    <property type="chains" value="A=100-386"/>
</dbReference>
<dbReference type="PDB" id="6YXD">
    <property type="method" value="X-ray"/>
    <property type="resolution" value="2.90 A"/>
    <property type="chains" value="A=100-386"/>
</dbReference>
<dbReference type="PDB" id="6YXF">
    <property type="method" value="X-ray"/>
    <property type="resolution" value="3.02 A"/>
    <property type="chains" value="A=100-386"/>
</dbReference>
<dbReference type="PDB" id="6YXG">
    <property type="method" value="X-ray"/>
    <property type="resolution" value="3.01 A"/>
    <property type="chains" value="A=100-386"/>
</dbReference>
<dbReference type="PDBsum" id="5LWY"/>
<dbReference type="PDBsum" id="5LX9"/>
<dbReference type="PDBsum" id="5LXA"/>
<dbReference type="PDBsum" id="6KS1"/>
<dbReference type="PDBsum" id="6YX9"/>
<dbReference type="PDBsum" id="6YXD"/>
<dbReference type="PDBsum" id="6YXF"/>
<dbReference type="PDBsum" id="6YXG"/>
<dbReference type="SMR" id="Q86V24"/>
<dbReference type="BioGRID" id="122739">
    <property type="interactions" value="123"/>
</dbReference>
<dbReference type="FunCoup" id="Q86V24">
    <property type="interactions" value="1035"/>
</dbReference>
<dbReference type="IntAct" id="Q86V24">
    <property type="interactions" value="9"/>
</dbReference>
<dbReference type="STRING" id="9606.ENSP00000349616"/>
<dbReference type="BindingDB" id="Q86V24"/>
<dbReference type="ChEMBL" id="CHEMBL3392947"/>
<dbReference type="TCDB" id="1.C.113.1.11">
    <property type="family name" value="the hemolysin iii (hly iii) family"/>
</dbReference>
<dbReference type="iPTMnet" id="Q86V24"/>
<dbReference type="PhosphoSitePlus" id="Q86V24"/>
<dbReference type="BioMuta" id="ADIPOR2"/>
<dbReference type="DMDM" id="38372190"/>
<dbReference type="jPOST" id="Q86V24"/>
<dbReference type="MassIVE" id="Q86V24"/>
<dbReference type="PaxDb" id="9606-ENSP00000349616"/>
<dbReference type="PeptideAtlas" id="Q86V24"/>
<dbReference type="ProteomicsDB" id="69953"/>
<dbReference type="ABCD" id="Q86V24">
    <property type="antibodies" value="1 sequenced antibody"/>
</dbReference>
<dbReference type="Antibodypedia" id="22097">
    <property type="antibodies" value="264 antibodies from 30 providers"/>
</dbReference>
<dbReference type="DNASU" id="79602"/>
<dbReference type="Ensembl" id="ENST00000357103.5">
    <property type="protein sequence ID" value="ENSP00000349616.4"/>
    <property type="gene ID" value="ENSG00000006831.10"/>
</dbReference>
<dbReference type="Ensembl" id="ENST00000645126.2">
    <property type="protein sequence ID" value="ENSP00000495699.1"/>
    <property type="gene ID" value="ENSG00000285070.2"/>
</dbReference>
<dbReference type="GeneID" id="79602"/>
<dbReference type="KEGG" id="hsa:79602"/>
<dbReference type="MANE-Select" id="ENST00000357103.5">
    <property type="protein sequence ID" value="ENSP00000349616.4"/>
    <property type="RefSeq nucleotide sequence ID" value="NM_024551.3"/>
    <property type="RefSeq protein sequence ID" value="NP_078827.2"/>
</dbReference>
<dbReference type="UCSC" id="uc001qjm.4">
    <property type="organism name" value="human"/>
</dbReference>
<dbReference type="AGR" id="HGNC:24041"/>
<dbReference type="CTD" id="79602"/>
<dbReference type="DisGeNET" id="79602"/>
<dbReference type="GeneCards" id="ADIPOR2"/>
<dbReference type="HGNC" id="HGNC:24041">
    <property type="gene designation" value="ADIPOR2"/>
</dbReference>
<dbReference type="HPA" id="ENSG00000006831">
    <property type="expression patterns" value="Low tissue specificity"/>
</dbReference>
<dbReference type="MalaCards" id="ADIPOR2"/>
<dbReference type="MIM" id="607946">
    <property type="type" value="gene"/>
</dbReference>
<dbReference type="neXtProt" id="NX_Q86V24"/>
<dbReference type="OpenTargets" id="ENSG00000006831"/>
<dbReference type="PharmGKB" id="PA128394711"/>
<dbReference type="VEuPathDB" id="HostDB:ENSG00000006831"/>
<dbReference type="eggNOG" id="KOG0748">
    <property type="taxonomic scope" value="Eukaryota"/>
</dbReference>
<dbReference type="GeneTree" id="ENSGT00940000156451"/>
<dbReference type="HOGENOM" id="CLU_023075_1_0_1"/>
<dbReference type="InParanoid" id="Q86V24"/>
<dbReference type="OMA" id="EHECNDE"/>
<dbReference type="OrthoDB" id="5585746at2759"/>
<dbReference type="PAN-GO" id="Q86V24">
    <property type="GO annotations" value="3 GO annotations based on evolutionary models"/>
</dbReference>
<dbReference type="PhylomeDB" id="Q86V24"/>
<dbReference type="TreeFam" id="TF313640"/>
<dbReference type="BRENDA" id="3.5.1.23">
    <property type="organism ID" value="2681"/>
</dbReference>
<dbReference type="PathwayCommons" id="Q86V24"/>
<dbReference type="Reactome" id="R-HSA-163680">
    <property type="pathway name" value="AMPK inhibits chREBP transcriptional activation activity"/>
</dbReference>
<dbReference type="SignaLink" id="Q86V24"/>
<dbReference type="SIGNOR" id="Q86V24"/>
<dbReference type="BioGRID-ORCS" id="79602">
    <property type="hits" value="32 hits in 1154 CRISPR screens"/>
</dbReference>
<dbReference type="ChiTaRS" id="ADIPOR2">
    <property type="organism name" value="human"/>
</dbReference>
<dbReference type="GeneWiki" id="ADIPOR2"/>
<dbReference type="GenomeRNAi" id="79602"/>
<dbReference type="Pharos" id="Q86V24">
    <property type="development level" value="Tbio"/>
</dbReference>
<dbReference type="PRO" id="PR:Q86V24"/>
<dbReference type="Proteomes" id="UP000005640">
    <property type="component" value="Chromosome 12"/>
</dbReference>
<dbReference type="RNAct" id="Q86V24">
    <property type="molecule type" value="protein"/>
</dbReference>
<dbReference type="Bgee" id="ENSG00000006831">
    <property type="expression patterns" value="Expressed in corpus callosum and 98 other cell types or tissues"/>
</dbReference>
<dbReference type="GO" id="GO:0005886">
    <property type="term" value="C:plasma membrane"/>
    <property type="evidence" value="ECO:0000314"/>
    <property type="project" value="UniProtKB"/>
</dbReference>
<dbReference type="GO" id="GO:0097003">
    <property type="term" value="F:adipokinetic hormone receptor activity"/>
    <property type="evidence" value="ECO:0000314"/>
    <property type="project" value="UniProtKB"/>
</dbReference>
<dbReference type="GO" id="GO:0055100">
    <property type="term" value="F:adiponectin binding"/>
    <property type="evidence" value="ECO:0000314"/>
    <property type="project" value="UniProtKB"/>
</dbReference>
<dbReference type="GO" id="GO:0042802">
    <property type="term" value="F:identical protein binding"/>
    <property type="evidence" value="ECO:0007669"/>
    <property type="project" value="Ensembl"/>
</dbReference>
<dbReference type="GO" id="GO:0046872">
    <property type="term" value="F:metal ion binding"/>
    <property type="evidence" value="ECO:0007669"/>
    <property type="project" value="UniProtKB-KW"/>
</dbReference>
<dbReference type="GO" id="GO:0038023">
    <property type="term" value="F:signaling receptor activity"/>
    <property type="evidence" value="ECO:0000318"/>
    <property type="project" value="GO_Central"/>
</dbReference>
<dbReference type="GO" id="GO:0033211">
    <property type="term" value="P:adiponectin-activated signaling pathway"/>
    <property type="evidence" value="ECO:0000314"/>
    <property type="project" value="UniProtKB"/>
</dbReference>
<dbReference type="GO" id="GO:0019395">
    <property type="term" value="P:fatty acid oxidation"/>
    <property type="evidence" value="ECO:0000250"/>
    <property type="project" value="UniProtKB"/>
</dbReference>
<dbReference type="GO" id="GO:0042593">
    <property type="term" value="P:glucose homeostasis"/>
    <property type="evidence" value="ECO:0000250"/>
    <property type="project" value="UniProtKB"/>
</dbReference>
<dbReference type="GO" id="GO:0009755">
    <property type="term" value="P:hormone-mediated signaling pathway"/>
    <property type="evidence" value="ECO:0000250"/>
    <property type="project" value="UniProtKB"/>
</dbReference>
<dbReference type="GO" id="GO:0120162">
    <property type="term" value="P:positive regulation of cold-induced thermogenesis"/>
    <property type="evidence" value="ECO:0000250"/>
    <property type="project" value="YuBioLab"/>
</dbReference>
<dbReference type="GO" id="GO:0061042">
    <property type="term" value="P:vascular wound healing"/>
    <property type="evidence" value="ECO:0000250"/>
    <property type="project" value="UniProtKB"/>
</dbReference>
<dbReference type="InterPro" id="IPR004254">
    <property type="entry name" value="AdipoR/HlyIII-related"/>
</dbReference>
<dbReference type="PANTHER" id="PTHR20855:SF33">
    <property type="entry name" value="ADIPONECTIN RECEPTOR PROTEIN 2"/>
    <property type="match status" value="1"/>
</dbReference>
<dbReference type="PANTHER" id="PTHR20855">
    <property type="entry name" value="ADIPOR/PROGESTIN RECEPTOR-RELATED"/>
    <property type="match status" value="1"/>
</dbReference>
<dbReference type="Pfam" id="PF03006">
    <property type="entry name" value="HlyIII"/>
    <property type="match status" value="1"/>
</dbReference>
<sequence>MNEPTENRLGCSRTPEPDIRLRKGHQLDGTRRGDNDSHQGDLEPILEASVLSSHHKKSSEEHEYSDEAPQEDEGFMGMSPLLQAHHAMEKMEEFVCKVWEGRWRVIPHDVLPDWLKDNDFLLHGHRPPMPSFRACFKSIFRIHTETGNIWTHLLGCVFFLCLGIFYMFRPNISFVAPLQEKVVFGLFFLGAILCLSFSWLFHTVYCHSEGVSRLFSKLDYSGIALLIMGSFVPWLYYSFYCNPQPCFIYLIVICVLGIAAIIVSQWDMFATPQYRGVRAGVFLGLGLSGIIPTLHYVISEGFLKAATIGQIGWLMLMASLYITGAALYAARIPERFFPGKCDIWFHSHQLFHIFVVAGAFVHFHGVSNLQEFRFMIGGGCSEEDAL</sequence>
<keyword id="KW-0002">3D-structure</keyword>
<keyword id="KW-1003">Cell membrane</keyword>
<keyword id="KW-0276">Fatty acid metabolism</keyword>
<keyword id="KW-0443">Lipid metabolism</keyword>
<keyword id="KW-0472">Membrane</keyword>
<keyword id="KW-0479">Metal-binding</keyword>
<keyword id="KW-1267">Proteomics identification</keyword>
<keyword id="KW-0675">Receptor</keyword>
<keyword id="KW-1185">Reference proteome</keyword>
<keyword id="KW-0812">Transmembrane</keyword>
<keyword id="KW-1133">Transmembrane helix</keyword>
<keyword id="KW-0862">Zinc</keyword>
<protein>
    <recommendedName>
        <fullName evidence="8">Adiponectin receptor protein 2</fullName>
    </recommendedName>
    <alternativeName>
        <fullName evidence="7">Progestin and adipoQ receptor family member 2</fullName>
    </alternativeName>
    <alternativeName>
        <fullName>Progestin and adipoQ receptor family member II</fullName>
    </alternativeName>
</protein>